<evidence type="ECO:0000250" key="1"/>
<evidence type="ECO:0000305" key="2"/>
<feature type="chain" id="PRO_0000216718" description="Alkanesulfonate monooxygenase 2">
    <location>
        <begin position="1"/>
        <end position="385"/>
    </location>
</feature>
<proteinExistence type="inferred from homology"/>
<comment type="function">
    <text evidence="1">Catalyzes the desulfonation of aliphatic sulfonates.</text>
</comment>
<comment type="catalytic activity">
    <reaction>
        <text>an alkanesulfonate + FMNH2 + O2 = an aldehyde + FMN + sulfite + H2O + 2 H(+)</text>
        <dbReference type="Rhea" id="RHEA:23064"/>
        <dbReference type="ChEBI" id="CHEBI:15377"/>
        <dbReference type="ChEBI" id="CHEBI:15378"/>
        <dbReference type="ChEBI" id="CHEBI:15379"/>
        <dbReference type="ChEBI" id="CHEBI:17359"/>
        <dbReference type="ChEBI" id="CHEBI:17478"/>
        <dbReference type="ChEBI" id="CHEBI:57618"/>
        <dbReference type="ChEBI" id="CHEBI:58210"/>
        <dbReference type="ChEBI" id="CHEBI:134249"/>
        <dbReference type="EC" id="1.14.14.5"/>
    </reaction>
</comment>
<comment type="similarity">
    <text evidence="2">Belongs to the SsuD family.</text>
</comment>
<sequence length="385" mass="42486">MTSPPSPLDFFWFIPTHGDGSYLGSEEQQRPPEFGYFKQIAQAVDRLGFPGVLLPTGQNCEDSWITATGLATLTEKLKFLVALRPGVTLPTFAARQTAALDRLSNGRLLLNVVVGGNPTELAGDGVFLPHDERYAQAHEFLTIWRGLVSGERVNFDGKYYRVENGRLDLLPSQERPPLYFGGSSDAGQDLAADLVDMYLTWGEPPALVAEKLASARKKAALRGRKLRFGIRLHFIVRETEDEAWRAADRLISHVTDAQIENAQARFLNQMDSVGQRRMAELHGGRRDRLVVSPNLWAGVGLVRGGAGTALVGTPEQVTERIREYQAIGIDTIIGSGYPHLEEAYRVAELLFPRLGLGTRRQQAHRDIANEFSVGFHGAARLQASS</sequence>
<gene>
    <name type="primary">ssuD2</name>
    <name type="ordered locus">mll4558</name>
</gene>
<name>SSUD2_RHILO</name>
<reference key="1">
    <citation type="journal article" date="2000" name="DNA Res.">
        <title>Complete genome structure of the nitrogen-fixing symbiotic bacterium Mesorhizobium loti.</title>
        <authorList>
            <person name="Kaneko T."/>
            <person name="Nakamura Y."/>
            <person name="Sato S."/>
            <person name="Asamizu E."/>
            <person name="Kato T."/>
            <person name="Sasamoto S."/>
            <person name="Watanabe A."/>
            <person name="Idesawa K."/>
            <person name="Ishikawa A."/>
            <person name="Kawashima K."/>
            <person name="Kimura T."/>
            <person name="Kishida Y."/>
            <person name="Kiyokawa C."/>
            <person name="Kohara M."/>
            <person name="Matsumoto M."/>
            <person name="Matsuno A."/>
            <person name="Mochizuki Y."/>
            <person name="Nakayama S."/>
            <person name="Nakazaki N."/>
            <person name="Shimpo S."/>
            <person name="Sugimoto M."/>
            <person name="Takeuchi C."/>
            <person name="Yamada M."/>
            <person name="Tabata S."/>
        </authorList>
    </citation>
    <scope>NUCLEOTIDE SEQUENCE [LARGE SCALE GENOMIC DNA]</scope>
    <source>
        <strain>LMG 29417 / CECT 9101 / MAFF 303099</strain>
    </source>
</reference>
<dbReference type="EC" id="1.14.14.5"/>
<dbReference type="EMBL" id="BA000012">
    <property type="protein sequence ID" value="BAB51186.1"/>
    <property type="molecule type" value="Genomic_DNA"/>
</dbReference>
<dbReference type="RefSeq" id="WP_010912528.1">
    <property type="nucleotide sequence ID" value="NC_002678.2"/>
</dbReference>
<dbReference type="SMR" id="Q98DT4"/>
<dbReference type="KEGG" id="mlo:mll4558"/>
<dbReference type="PATRIC" id="fig|266835.9.peg.3600"/>
<dbReference type="eggNOG" id="COG2141">
    <property type="taxonomic scope" value="Bacteria"/>
</dbReference>
<dbReference type="HOGENOM" id="CLU_027853_1_0_5"/>
<dbReference type="Proteomes" id="UP000000552">
    <property type="component" value="Chromosome"/>
</dbReference>
<dbReference type="GO" id="GO:0008726">
    <property type="term" value="F:alkanesulfonate monooxygenase activity"/>
    <property type="evidence" value="ECO:0007669"/>
    <property type="project" value="UniProtKB-UniRule"/>
</dbReference>
<dbReference type="GO" id="GO:0046306">
    <property type="term" value="P:alkanesulfonate catabolic process"/>
    <property type="evidence" value="ECO:0007669"/>
    <property type="project" value="TreeGrafter"/>
</dbReference>
<dbReference type="CDD" id="cd01094">
    <property type="entry name" value="Alkanesulfonate_monoxygenase"/>
    <property type="match status" value="1"/>
</dbReference>
<dbReference type="Gene3D" id="3.20.20.30">
    <property type="entry name" value="Luciferase-like domain"/>
    <property type="match status" value="1"/>
</dbReference>
<dbReference type="HAMAP" id="MF_01229">
    <property type="entry name" value="Alkanesulf_monooxygen"/>
    <property type="match status" value="1"/>
</dbReference>
<dbReference type="InterPro" id="IPR019911">
    <property type="entry name" value="Alkanesulphonate_mOase_FMN-dep"/>
</dbReference>
<dbReference type="InterPro" id="IPR011251">
    <property type="entry name" value="Luciferase-like_dom"/>
</dbReference>
<dbReference type="InterPro" id="IPR036661">
    <property type="entry name" value="Luciferase-like_sf"/>
</dbReference>
<dbReference type="InterPro" id="IPR050172">
    <property type="entry name" value="SsuD_RutA_monooxygenase"/>
</dbReference>
<dbReference type="NCBIfam" id="TIGR03565">
    <property type="entry name" value="alk_sulf_monoox"/>
    <property type="match status" value="1"/>
</dbReference>
<dbReference type="NCBIfam" id="NF001939">
    <property type="entry name" value="PRK00719.1"/>
    <property type="match status" value="1"/>
</dbReference>
<dbReference type="PANTHER" id="PTHR42847">
    <property type="entry name" value="ALKANESULFONATE MONOOXYGENASE"/>
    <property type="match status" value="1"/>
</dbReference>
<dbReference type="PANTHER" id="PTHR42847:SF4">
    <property type="entry name" value="ALKANESULFONATE MONOOXYGENASE-RELATED"/>
    <property type="match status" value="1"/>
</dbReference>
<dbReference type="Pfam" id="PF00296">
    <property type="entry name" value="Bac_luciferase"/>
    <property type="match status" value="1"/>
</dbReference>
<dbReference type="SUPFAM" id="SSF51679">
    <property type="entry name" value="Bacterial luciferase-like"/>
    <property type="match status" value="1"/>
</dbReference>
<keyword id="KW-0285">Flavoprotein</keyword>
<keyword id="KW-0288">FMN</keyword>
<keyword id="KW-0503">Monooxygenase</keyword>
<keyword id="KW-0560">Oxidoreductase</keyword>
<organism>
    <name type="scientific">Mesorhizobium japonicum (strain LMG 29417 / CECT 9101 / MAFF 303099)</name>
    <name type="common">Mesorhizobium loti (strain MAFF 303099)</name>
    <dbReference type="NCBI Taxonomy" id="266835"/>
    <lineage>
        <taxon>Bacteria</taxon>
        <taxon>Pseudomonadati</taxon>
        <taxon>Pseudomonadota</taxon>
        <taxon>Alphaproteobacteria</taxon>
        <taxon>Hyphomicrobiales</taxon>
        <taxon>Phyllobacteriaceae</taxon>
        <taxon>Mesorhizobium</taxon>
    </lineage>
</organism>
<accession>Q98DT4</accession>
<protein>
    <recommendedName>
        <fullName>Alkanesulfonate monooxygenase 2</fullName>
        <ecNumber>1.14.14.5</ecNumber>
    </recommendedName>
    <alternativeName>
        <fullName>FMNH2-dependent aliphatic sulfonate monooxygenase 2</fullName>
    </alternativeName>
</protein>